<comment type="function">
    <text evidence="1">Probably deamidates glutamine residues to glutamate on methyl-accepting chemotaxis receptors (MCPs), playing an important role in chemotaxis.</text>
</comment>
<comment type="catalytic activity">
    <reaction evidence="1">
        <text>L-glutaminyl-[protein] + H2O = L-glutamyl-[protein] + NH4(+)</text>
        <dbReference type="Rhea" id="RHEA:16441"/>
        <dbReference type="Rhea" id="RHEA-COMP:10207"/>
        <dbReference type="Rhea" id="RHEA-COMP:10208"/>
        <dbReference type="ChEBI" id="CHEBI:15377"/>
        <dbReference type="ChEBI" id="CHEBI:28938"/>
        <dbReference type="ChEBI" id="CHEBI:29973"/>
        <dbReference type="ChEBI" id="CHEBI:30011"/>
        <dbReference type="EC" id="3.5.1.44"/>
    </reaction>
</comment>
<comment type="similarity">
    <text evidence="1">Belongs to the CheD family.</text>
</comment>
<proteinExistence type="inferred from homology"/>
<accession>B9J950</accession>
<feature type="chain" id="PRO_1000184919" description="Probable chemoreceptor glutamine deamidase CheD">
    <location>
        <begin position="1"/>
        <end position="184"/>
    </location>
</feature>
<reference key="1">
    <citation type="journal article" date="2009" name="J. Bacteriol.">
        <title>Genome sequences of three Agrobacterium biovars help elucidate the evolution of multichromosome genomes in bacteria.</title>
        <authorList>
            <person name="Slater S.C."/>
            <person name="Goldman B.S."/>
            <person name="Goodner B."/>
            <person name="Setubal J.C."/>
            <person name="Farrand S.K."/>
            <person name="Nester E.W."/>
            <person name="Burr T.J."/>
            <person name="Banta L."/>
            <person name="Dickerman A.W."/>
            <person name="Paulsen I."/>
            <person name="Otten L."/>
            <person name="Suen G."/>
            <person name="Welch R."/>
            <person name="Almeida N.F."/>
            <person name="Arnold F."/>
            <person name="Burton O.T."/>
            <person name="Du Z."/>
            <person name="Ewing A."/>
            <person name="Godsy E."/>
            <person name="Heisel S."/>
            <person name="Houmiel K.L."/>
            <person name="Jhaveri J."/>
            <person name="Lu J."/>
            <person name="Miller N.M."/>
            <person name="Norton S."/>
            <person name="Chen Q."/>
            <person name="Phoolcharoen W."/>
            <person name="Ohlin V."/>
            <person name="Ondrusek D."/>
            <person name="Pride N."/>
            <person name="Stricklin S.L."/>
            <person name="Sun J."/>
            <person name="Wheeler C."/>
            <person name="Wilson L."/>
            <person name="Zhu H."/>
            <person name="Wood D.W."/>
        </authorList>
    </citation>
    <scope>NUCLEOTIDE SEQUENCE [LARGE SCALE GENOMIC DNA]</scope>
    <source>
        <strain>K84 / ATCC BAA-868</strain>
    </source>
</reference>
<protein>
    <recommendedName>
        <fullName evidence="1">Probable chemoreceptor glutamine deamidase CheD</fullName>
        <ecNumber evidence="1">3.5.1.44</ecNumber>
    </recommendedName>
</protein>
<dbReference type="EC" id="3.5.1.44" evidence="1"/>
<dbReference type="EMBL" id="CP000628">
    <property type="protein sequence ID" value="ACM25452.1"/>
    <property type="molecule type" value="Genomic_DNA"/>
</dbReference>
<dbReference type="RefSeq" id="WP_007695710.1">
    <property type="nucleotide sequence ID" value="NC_011985.1"/>
</dbReference>
<dbReference type="SMR" id="B9J950"/>
<dbReference type="STRING" id="311403.Arad_0855"/>
<dbReference type="GeneID" id="86847271"/>
<dbReference type="KEGG" id="ara:Arad_0855"/>
<dbReference type="eggNOG" id="COG1871">
    <property type="taxonomic scope" value="Bacteria"/>
</dbReference>
<dbReference type="HOGENOM" id="CLU_087854_0_1_5"/>
<dbReference type="Proteomes" id="UP000001600">
    <property type="component" value="Chromosome 1"/>
</dbReference>
<dbReference type="GO" id="GO:0050568">
    <property type="term" value="F:protein-glutamine glutaminase activity"/>
    <property type="evidence" value="ECO:0007669"/>
    <property type="project" value="UniProtKB-UniRule"/>
</dbReference>
<dbReference type="GO" id="GO:0006935">
    <property type="term" value="P:chemotaxis"/>
    <property type="evidence" value="ECO:0007669"/>
    <property type="project" value="UniProtKB-UniRule"/>
</dbReference>
<dbReference type="CDD" id="cd16352">
    <property type="entry name" value="CheD"/>
    <property type="match status" value="1"/>
</dbReference>
<dbReference type="FunFam" id="3.30.1330.200:FF:000001">
    <property type="entry name" value="Probable chemoreceptor glutamine deamidase CheD"/>
    <property type="match status" value="1"/>
</dbReference>
<dbReference type="Gene3D" id="3.30.1330.200">
    <property type="match status" value="1"/>
</dbReference>
<dbReference type="HAMAP" id="MF_01440">
    <property type="entry name" value="CheD"/>
    <property type="match status" value="1"/>
</dbReference>
<dbReference type="InterPro" id="IPR038592">
    <property type="entry name" value="CheD-like_sf"/>
</dbReference>
<dbReference type="InterPro" id="IPR005659">
    <property type="entry name" value="Chemorcpt_Glu_NH3ase_CheD"/>
</dbReference>
<dbReference type="InterPro" id="IPR011324">
    <property type="entry name" value="Cytotoxic_necrot_fac-like_cat"/>
</dbReference>
<dbReference type="NCBIfam" id="NF010019">
    <property type="entry name" value="PRK13497.1"/>
    <property type="match status" value="1"/>
</dbReference>
<dbReference type="PANTHER" id="PTHR35147">
    <property type="entry name" value="CHEMORECEPTOR GLUTAMINE DEAMIDASE CHED-RELATED"/>
    <property type="match status" value="1"/>
</dbReference>
<dbReference type="PANTHER" id="PTHR35147:SF2">
    <property type="entry name" value="CHEMORECEPTOR GLUTAMINE DEAMIDASE CHED-RELATED"/>
    <property type="match status" value="1"/>
</dbReference>
<dbReference type="Pfam" id="PF03975">
    <property type="entry name" value="CheD"/>
    <property type="match status" value="1"/>
</dbReference>
<dbReference type="SUPFAM" id="SSF64438">
    <property type="entry name" value="CNF1/YfiH-like putative cysteine hydrolases"/>
    <property type="match status" value="1"/>
</dbReference>
<organism>
    <name type="scientific">Rhizobium rhizogenes (strain K84 / ATCC BAA-868)</name>
    <name type="common">Agrobacterium radiobacter</name>
    <dbReference type="NCBI Taxonomy" id="311403"/>
    <lineage>
        <taxon>Bacteria</taxon>
        <taxon>Pseudomonadati</taxon>
        <taxon>Pseudomonadota</taxon>
        <taxon>Alphaproteobacteria</taxon>
        <taxon>Hyphomicrobiales</taxon>
        <taxon>Rhizobiaceae</taxon>
        <taxon>Rhizobium/Agrobacterium group</taxon>
        <taxon>Rhizobium</taxon>
    </lineage>
</organism>
<sequence>MILEATARRVHIIQGEYKVIGDPEVVLATILGSCVAACLRDPVAGVGGMNHFLLPGMASSPTSGGDATRYGVHLMELLINGLLKQGARRDRLEAKVFGGAKTIATFSNVGEQNAAFAMQFLRDEGIPVVSSSTGGEHGRKVEYWPVSGRARQYPLTGAETQKTVALEQRPVAAPKPVDNAIEFF</sequence>
<name>CHED_RHIR8</name>
<keyword id="KW-0145">Chemotaxis</keyword>
<keyword id="KW-0378">Hydrolase</keyword>
<evidence type="ECO:0000255" key="1">
    <source>
        <dbReference type="HAMAP-Rule" id="MF_01440"/>
    </source>
</evidence>
<gene>
    <name evidence="1" type="primary">cheD</name>
    <name type="ordered locus">Arad_0855</name>
</gene>